<organism>
    <name type="scientific">Methanococcus aeolicus (strain ATCC BAA-1280 / DSM 17508 / OCM 812 / Nankai-3)</name>
    <dbReference type="NCBI Taxonomy" id="419665"/>
    <lineage>
        <taxon>Archaea</taxon>
        <taxon>Methanobacteriati</taxon>
        <taxon>Methanobacteriota</taxon>
        <taxon>Methanomada group</taxon>
        <taxon>Methanococci</taxon>
        <taxon>Methanococcales</taxon>
        <taxon>Methanococcaceae</taxon>
        <taxon>Methanococcus</taxon>
    </lineage>
</organism>
<accession>A6UVH2</accession>
<protein>
    <recommendedName>
        <fullName evidence="1">Ribonuclease P protein component 2</fullName>
        <shortName evidence="1">RNase P component 2</shortName>
        <ecNumber evidence="1">3.1.26.5</ecNumber>
    </recommendedName>
    <alternativeName>
        <fullName evidence="1">Pop5</fullName>
    </alternativeName>
</protein>
<dbReference type="EC" id="3.1.26.5" evidence="1"/>
<dbReference type="EMBL" id="CP000743">
    <property type="protein sequence ID" value="ABR56494.1"/>
    <property type="molecule type" value="Genomic_DNA"/>
</dbReference>
<dbReference type="RefSeq" id="WP_011973626.1">
    <property type="nucleotide sequence ID" value="NC_009635.1"/>
</dbReference>
<dbReference type="SMR" id="A6UVH2"/>
<dbReference type="STRING" id="419665.Maeo_0913"/>
<dbReference type="GeneID" id="5326985"/>
<dbReference type="KEGG" id="mae:Maeo_0913"/>
<dbReference type="eggNOG" id="arCOG01365">
    <property type="taxonomic scope" value="Archaea"/>
</dbReference>
<dbReference type="HOGENOM" id="CLU_137733_1_0_2"/>
<dbReference type="OrthoDB" id="19261at2157"/>
<dbReference type="Proteomes" id="UP000001106">
    <property type="component" value="Chromosome"/>
</dbReference>
<dbReference type="GO" id="GO:0005737">
    <property type="term" value="C:cytoplasm"/>
    <property type="evidence" value="ECO:0007669"/>
    <property type="project" value="UniProtKB-SubCell"/>
</dbReference>
<dbReference type="GO" id="GO:0030677">
    <property type="term" value="C:ribonuclease P complex"/>
    <property type="evidence" value="ECO:0007669"/>
    <property type="project" value="UniProtKB-UniRule"/>
</dbReference>
<dbReference type="GO" id="GO:0004526">
    <property type="term" value="F:ribonuclease P activity"/>
    <property type="evidence" value="ECO:0007669"/>
    <property type="project" value="UniProtKB-UniRule"/>
</dbReference>
<dbReference type="GO" id="GO:0001682">
    <property type="term" value="P:tRNA 5'-leader removal"/>
    <property type="evidence" value="ECO:0007669"/>
    <property type="project" value="UniProtKB-UniRule"/>
</dbReference>
<dbReference type="Gene3D" id="3.30.70.3250">
    <property type="entry name" value="Ribonuclease P, Pop5 subunit"/>
    <property type="match status" value="1"/>
</dbReference>
<dbReference type="HAMAP" id="MF_00755">
    <property type="entry name" value="RNase_P_2"/>
    <property type="match status" value="1"/>
</dbReference>
<dbReference type="InterPro" id="IPR002759">
    <property type="entry name" value="Pop5/Rpp14/Rnp2-like"/>
</dbReference>
<dbReference type="InterPro" id="IPR038085">
    <property type="entry name" value="Rnp2-like_sf"/>
</dbReference>
<dbReference type="InterPro" id="IPR016434">
    <property type="entry name" value="Rnp2_archaea"/>
</dbReference>
<dbReference type="PANTHER" id="PTHR15441">
    <property type="entry name" value="RIBONUCLEASE P PROTEIN SUBUNIT P14"/>
    <property type="match status" value="1"/>
</dbReference>
<dbReference type="PANTHER" id="PTHR15441:SF2">
    <property type="entry name" value="RIBONUCLEASE P_MRP PROTEIN SUBUNIT POP5"/>
    <property type="match status" value="1"/>
</dbReference>
<dbReference type="Pfam" id="PF01900">
    <property type="entry name" value="RNase_P_Rpp14"/>
    <property type="match status" value="1"/>
</dbReference>
<dbReference type="PIRSF" id="PIRSF004952">
    <property type="entry name" value="RNase_P_2"/>
    <property type="match status" value="1"/>
</dbReference>
<dbReference type="SUPFAM" id="SSF160350">
    <property type="entry name" value="Rnp2-like"/>
    <property type="match status" value="1"/>
</dbReference>
<name>RNP2_META3</name>
<gene>
    <name evidence="1" type="primary">rnp2</name>
    <name type="ordered locus">Maeo_0913</name>
</gene>
<keyword id="KW-0963">Cytoplasm</keyword>
<keyword id="KW-0255">Endonuclease</keyword>
<keyword id="KW-0378">Hydrolase</keyword>
<keyword id="KW-0540">Nuclease</keyword>
<keyword id="KW-0819">tRNA processing</keyword>
<feature type="chain" id="PRO_1000046620" description="Ribonuclease P protein component 2">
    <location>
        <begin position="1"/>
        <end position="135"/>
    </location>
</feature>
<comment type="function">
    <text evidence="1">Part of ribonuclease P, a protein complex that generates mature tRNA molecules by cleaving their 5'-ends.</text>
</comment>
<comment type="catalytic activity">
    <reaction evidence="1">
        <text>Endonucleolytic cleavage of RNA, removing 5'-extranucleotides from tRNA precursor.</text>
        <dbReference type="EC" id="3.1.26.5"/>
    </reaction>
</comment>
<comment type="subunit">
    <text evidence="1">Consists of a catalytic RNA component and at least 4-5 protein subunits.</text>
</comment>
<comment type="subcellular location">
    <subcellularLocation>
        <location evidence="1">Cytoplasm</location>
    </subcellularLocation>
</comment>
<comment type="similarity">
    <text evidence="1">Belongs to the eukaryotic/archaeal RNase P protein component 2 family.</text>
</comment>
<proteinExistence type="inferred from homology"/>
<reference key="1">
    <citation type="submission" date="2007-06" db="EMBL/GenBank/DDBJ databases">
        <title>Complete sequence of Methanococcus aeolicus Nankai-3.</title>
        <authorList>
            <consortium name="US DOE Joint Genome Institute"/>
            <person name="Copeland A."/>
            <person name="Lucas S."/>
            <person name="Lapidus A."/>
            <person name="Barry K."/>
            <person name="Glavina del Rio T."/>
            <person name="Dalin E."/>
            <person name="Tice H."/>
            <person name="Pitluck S."/>
            <person name="Chain P."/>
            <person name="Malfatti S."/>
            <person name="Shin M."/>
            <person name="Vergez L."/>
            <person name="Schmutz J."/>
            <person name="Larimer F."/>
            <person name="Land M."/>
            <person name="Hauser L."/>
            <person name="Kyrpides N."/>
            <person name="Lykidis A."/>
            <person name="Sieprawska-Lupa M."/>
            <person name="Whitman W.B."/>
            <person name="Richardson P."/>
        </authorList>
    </citation>
    <scope>NUCLEOTIDE SEQUENCE [LARGE SCALE GENOMIC DNA]</scope>
    <source>
        <strain>ATCC BAA-1280 / DSM 17508 / OCM 812 / Nankai-3</strain>
    </source>
</reference>
<evidence type="ECO:0000255" key="1">
    <source>
        <dbReference type="HAMAP-Rule" id="MF_00755"/>
    </source>
</evidence>
<sequence>MLKTLPPTIREKKRYISFKIIYNNELSGGEVVNLIRSSLINYYGVWGSSKCNPWLIDYTHPKGLLRITREEVDFVKSALISINEYKKNPINIIILGVSGTIKKSREKFLKVPHEKYYKVIQRRKKENSYKNRLRK</sequence>